<comment type="function">
    <text evidence="2">Catalyzes the transfer of a phosphate from ATP to alpha-D-galactose and participates in the first committed step in the catabolism of galactose.</text>
</comment>
<comment type="catalytic activity">
    <reaction evidence="2">
        <text>alpha-D-galactose + ATP = alpha-D-galactose 1-phosphate + ADP + H(+)</text>
        <dbReference type="Rhea" id="RHEA:13553"/>
        <dbReference type="ChEBI" id="CHEBI:15378"/>
        <dbReference type="ChEBI" id="CHEBI:28061"/>
        <dbReference type="ChEBI" id="CHEBI:30616"/>
        <dbReference type="ChEBI" id="CHEBI:58336"/>
        <dbReference type="ChEBI" id="CHEBI:456216"/>
        <dbReference type="EC" id="2.7.1.6"/>
    </reaction>
    <physiologicalReaction direction="left-to-right" evidence="2">
        <dbReference type="Rhea" id="RHEA:13554"/>
    </physiologicalReaction>
</comment>
<comment type="pathway">
    <text evidence="2">Carbohydrate metabolism; galactose metabolism.</text>
</comment>
<comment type="subunit">
    <text evidence="2">Homodimer.</text>
</comment>
<comment type="similarity">
    <text evidence="4">Belongs to the GHMP kinase family. GalK subfamily.</text>
</comment>
<organism>
    <name type="scientific">Bos taurus</name>
    <name type="common">Bovine</name>
    <dbReference type="NCBI Taxonomy" id="9913"/>
    <lineage>
        <taxon>Eukaryota</taxon>
        <taxon>Metazoa</taxon>
        <taxon>Chordata</taxon>
        <taxon>Craniata</taxon>
        <taxon>Vertebrata</taxon>
        <taxon>Euteleostomi</taxon>
        <taxon>Mammalia</taxon>
        <taxon>Eutheria</taxon>
        <taxon>Laurasiatheria</taxon>
        <taxon>Artiodactyla</taxon>
        <taxon>Ruminantia</taxon>
        <taxon>Pecora</taxon>
        <taxon>Bovidae</taxon>
        <taxon>Bovinae</taxon>
        <taxon>Bos</taxon>
    </lineage>
</organism>
<gene>
    <name type="primary">GALK1</name>
</gene>
<sequence length="392" mass="42227">MAASEQPQAGELLAKARRAFLEEFGAEPELAVSAPGRVNLIGEHTDYNRGLVLPMALELVTVLVGSPRVDGLVSLLTTSEDADEPRRLQFPLPTSQRPLEPGTPHWANYVKGVIQHYPAAPLPGFSAVVVSSVPLGGGLSSSASLEVATYTFLQQLCPDSGTIAARAQVCQRAEHSFAGVPCGIMDQLIALLGQRGHALLIDCRSLETSLVPLSDPKLAVLITNSNVRHSLGSSEYPLRRRQCEEVARALGKESLREVQLEELEAGRDLMSTEAFRRARHVVGEIQRTAQAAAALRRGDYRAFGRLMVESHHSLRDDYEVSCPELDQLVEAALSAPGVYGSRMTGGGFGGCTVTLLEASAAPRVMQHIQEQYHGTATFYLSQAADGAKVLHF</sequence>
<accession>A6H768</accession>
<accession>Q1JP66</accession>
<dbReference type="EC" id="2.7.1.6" evidence="2"/>
<dbReference type="EMBL" id="BC146132">
    <property type="protein sequence ID" value="AAI46133.1"/>
    <property type="molecule type" value="mRNA"/>
</dbReference>
<dbReference type="EMBL" id="BT025341">
    <property type="protein sequence ID" value="ABF57297.1"/>
    <property type="molecule type" value="mRNA"/>
</dbReference>
<dbReference type="EMBL" id="BT025347">
    <property type="protein sequence ID" value="ABF57303.1"/>
    <property type="molecule type" value="mRNA"/>
</dbReference>
<dbReference type="EMBL" id="BT025488">
    <property type="protein sequence ID" value="ABF57444.1"/>
    <property type="molecule type" value="mRNA"/>
</dbReference>
<dbReference type="EMBL" id="BT026290">
    <property type="protein sequence ID" value="ABG81446.1"/>
    <property type="molecule type" value="mRNA"/>
</dbReference>
<dbReference type="RefSeq" id="NP_001092851.1">
    <property type="nucleotide sequence ID" value="NM_001099381.1"/>
</dbReference>
<dbReference type="SMR" id="A6H768"/>
<dbReference type="FunCoup" id="A6H768">
    <property type="interactions" value="749"/>
</dbReference>
<dbReference type="STRING" id="9913.ENSBTAP00000019921"/>
<dbReference type="PaxDb" id="9913-ENSBTAP00000019921"/>
<dbReference type="PeptideAtlas" id="A6H768"/>
<dbReference type="GeneID" id="530855"/>
<dbReference type="KEGG" id="bta:530855"/>
<dbReference type="CTD" id="2584"/>
<dbReference type="VEuPathDB" id="HostDB:ENSBTAG00000014964"/>
<dbReference type="eggNOG" id="KOG0631">
    <property type="taxonomic scope" value="Eukaryota"/>
</dbReference>
<dbReference type="InParanoid" id="A6H768"/>
<dbReference type="OMA" id="VMPCAIN"/>
<dbReference type="OrthoDB" id="275179at2759"/>
<dbReference type="Reactome" id="R-BTA-70370">
    <property type="pathway name" value="Galactose catabolism"/>
</dbReference>
<dbReference type="UniPathway" id="UPA00214"/>
<dbReference type="Proteomes" id="UP000009136">
    <property type="component" value="Chromosome 19"/>
</dbReference>
<dbReference type="Bgee" id="ENSBTAG00000014964">
    <property type="expression patterns" value="Expressed in anterior segment of eyeball and 108 other cell types or tissues"/>
</dbReference>
<dbReference type="GO" id="GO:0005829">
    <property type="term" value="C:cytosol"/>
    <property type="evidence" value="ECO:0000318"/>
    <property type="project" value="GO_Central"/>
</dbReference>
<dbReference type="GO" id="GO:0005524">
    <property type="term" value="F:ATP binding"/>
    <property type="evidence" value="ECO:0007669"/>
    <property type="project" value="UniProtKB-KW"/>
</dbReference>
<dbReference type="GO" id="GO:0004335">
    <property type="term" value="F:galactokinase activity"/>
    <property type="evidence" value="ECO:0000318"/>
    <property type="project" value="GO_Central"/>
</dbReference>
<dbReference type="GO" id="GO:0006012">
    <property type="term" value="P:galactose metabolic process"/>
    <property type="evidence" value="ECO:0000318"/>
    <property type="project" value="GO_Central"/>
</dbReference>
<dbReference type="FunFam" id="3.30.230.10:FF:000040">
    <property type="entry name" value="Galactokinase 1"/>
    <property type="match status" value="1"/>
</dbReference>
<dbReference type="FunFam" id="3.30.70.890:FF:000007">
    <property type="entry name" value="Galactokinase 1"/>
    <property type="match status" value="1"/>
</dbReference>
<dbReference type="Gene3D" id="3.30.230.10">
    <property type="match status" value="1"/>
</dbReference>
<dbReference type="Gene3D" id="3.30.70.890">
    <property type="entry name" value="GHMP kinase, C-terminal domain"/>
    <property type="match status" value="1"/>
</dbReference>
<dbReference type="InterPro" id="IPR000705">
    <property type="entry name" value="Galactokinase"/>
</dbReference>
<dbReference type="InterPro" id="IPR019741">
    <property type="entry name" value="Galactokinase_CS"/>
</dbReference>
<dbReference type="InterPro" id="IPR019539">
    <property type="entry name" value="GalKase_N"/>
</dbReference>
<dbReference type="InterPro" id="IPR013750">
    <property type="entry name" value="GHMP_kinase_C_dom"/>
</dbReference>
<dbReference type="InterPro" id="IPR036554">
    <property type="entry name" value="GHMP_kinase_C_sf"/>
</dbReference>
<dbReference type="InterPro" id="IPR006204">
    <property type="entry name" value="GHMP_kinase_N_dom"/>
</dbReference>
<dbReference type="InterPro" id="IPR006203">
    <property type="entry name" value="GHMP_knse_ATP-bd_CS"/>
</dbReference>
<dbReference type="InterPro" id="IPR006206">
    <property type="entry name" value="Mevalonate/galactokinase"/>
</dbReference>
<dbReference type="InterPro" id="IPR020568">
    <property type="entry name" value="Ribosomal_Su5_D2-typ_SF"/>
</dbReference>
<dbReference type="InterPro" id="IPR014721">
    <property type="entry name" value="Ribsml_uS5_D2-typ_fold_subgr"/>
</dbReference>
<dbReference type="NCBIfam" id="TIGR00131">
    <property type="entry name" value="gal_kin"/>
    <property type="match status" value="1"/>
</dbReference>
<dbReference type="PANTHER" id="PTHR10457:SF7">
    <property type="entry name" value="GALACTOKINASE-RELATED"/>
    <property type="match status" value="1"/>
</dbReference>
<dbReference type="PANTHER" id="PTHR10457">
    <property type="entry name" value="MEVALONATE KINASE/GALACTOKINASE"/>
    <property type="match status" value="1"/>
</dbReference>
<dbReference type="Pfam" id="PF10509">
    <property type="entry name" value="GalKase_gal_bdg"/>
    <property type="match status" value="1"/>
</dbReference>
<dbReference type="Pfam" id="PF08544">
    <property type="entry name" value="GHMP_kinases_C"/>
    <property type="match status" value="1"/>
</dbReference>
<dbReference type="Pfam" id="PF00288">
    <property type="entry name" value="GHMP_kinases_N"/>
    <property type="match status" value="1"/>
</dbReference>
<dbReference type="PIRSF" id="PIRSF000530">
    <property type="entry name" value="Galactokinase"/>
    <property type="match status" value="1"/>
</dbReference>
<dbReference type="PRINTS" id="PR00473">
    <property type="entry name" value="GALCTOKINASE"/>
</dbReference>
<dbReference type="PRINTS" id="PR00959">
    <property type="entry name" value="MEVGALKINASE"/>
</dbReference>
<dbReference type="SUPFAM" id="SSF55060">
    <property type="entry name" value="GHMP Kinase, C-terminal domain"/>
    <property type="match status" value="1"/>
</dbReference>
<dbReference type="SUPFAM" id="SSF54211">
    <property type="entry name" value="Ribosomal protein S5 domain 2-like"/>
    <property type="match status" value="1"/>
</dbReference>
<dbReference type="PROSITE" id="PS00106">
    <property type="entry name" value="GALACTOKINASE"/>
    <property type="match status" value="1"/>
</dbReference>
<dbReference type="PROSITE" id="PS00627">
    <property type="entry name" value="GHMP_KINASES_ATP"/>
    <property type="match status" value="1"/>
</dbReference>
<name>GALK1_BOVIN</name>
<evidence type="ECO:0000250" key="1">
    <source>
        <dbReference type="UniProtKB" id="P04385"/>
    </source>
</evidence>
<evidence type="ECO:0000250" key="2">
    <source>
        <dbReference type="UniProtKB" id="P51570"/>
    </source>
</evidence>
<evidence type="ECO:0000250" key="3">
    <source>
        <dbReference type="UniProtKB" id="Q9HHB6"/>
    </source>
</evidence>
<evidence type="ECO:0000305" key="4"/>
<reference key="1">
    <citation type="submission" date="2007-06" db="EMBL/GenBank/DDBJ databases">
        <authorList>
            <consortium name="NIH - Mammalian Gene Collection (MGC) project"/>
        </authorList>
    </citation>
    <scope>NUCLEOTIDE SEQUENCE [LARGE SCALE MRNA]</scope>
    <source>
        <strain>Hereford</strain>
        <tissue>Fetal pons</tissue>
    </source>
</reference>
<reference key="2">
    <citation type="journal article" date="2005" name="BMC Genomics">
        <title>Characterization of 954 bovine full-CDS cDNA sequences.</title>
        <authorList>
            <person name="Harhay G.P."/>
            <person name="Sonstegard T.S."/>
            <person name="Keele J.W."/>
            <person name="Heaton M.P."/>
            <person name="Clawson M.L."/>
            <person name="Snelling W.M."/>
            <person name="Wiedmann R.T."/>
            <person name="Van Tassell C.P."/>
            <person name="Smith T.P.L."/>
        </authorList>
    </citation>
    <scope>NUCLEOTIDE SEQUENCE [LARGE SCALE MRNA] OF 1-290</scope>
</reference>
<feature type="chain" id="PRO_0000320045" description="Galactokinase">
    <location>
        <begin position="1"/>
        <end position="392"/>
    </location>
</feature>
<feature type="active site" description="Proton acceptor" evidence="3">
    <location>
        <position position="186"/>
    </location>
</feature>
<feature type="binding site" evidence="1">
    <location>
        <position position="37"/>
    </location>
    <ligand>
        <name>alpha-D-galactose</name>
        <dbReference type="ChEBI" id="CHEBI:28061"/>
    </ligand>
</feature>
<feature type="binding site" evidence="1">
    <location>
        <position position="43"/>
    </location>
    <ligand>
        <name>alpha-D-galactose</name>
        <dbReference type="ChEBI" id="CHEBI:28061"/>
    </ligand>
</feature>
<feature type="binding site" evidence="1">
    <location>
        <position position="44"/>
    </location>
    <ligand>
        <name>alpha-D-galactose</name>
        <dbReference type="ChEBI" id="CHEBI:28061"/>
    </ligand>
</feature>
<feature type="binding site" evidence="1">
    <location>
        <position position="46"/>
    </location>
    <ligand>
        <name>alpha-D-galactose</name>
        <dbReference type="ChEBI" id="CHEBI:28061"/>
    </ligand>
</feature>
<feature type="binding site" evidence="1">
    <location>
        <position position="136"/>
    </location>
    <ligand>
        <name>ATP</name>
        <dbReference type="ChEBI" id="CHEBI:30616"/>
    </ligand>
</feature>
<feature type="binding site" evidence="1">
    <location>
        <position position="138"/>
    </location>
    <ligand>
        <name>ATP</name>
        <dbReference type="ChEBI" id="CHEBI:30616"/>
    </ligand>
</feature>
<feature type="binding site" evidence="1">
    <location>
        <position position="140"/>
    </location>
    <ligand>
        <name>ATP</name>
        <dbReference type="ChEBI" id="CHEBI:30616"/>
    </ligand>
</feature>
<feature type="binding site" evidence="1">
    <location>
        <position position="141"/>
    </location>
    <ligand>
        <name>ATP</name>
        <dbReference type="ChEBI" id="CHEBI:30616"/>
    </ligand>
</feature>
<feature type="binding site" evidence="1">
    <location>
        <position position="186"/>
    </location>
    <ligand>
        <name>alpha-D-galactose</name>
        <dbReference type="ChEBI" id="CHEBI:28061"/>
    </ligand>
</feature>
<feature type="binding site" evidence="1">
    <location>
        <position position="236"/>
    </location>
    <ligand>
        <name>alpha-D-galactose</name>
        <dbReference type="ChEBI" id="CHEBI:28061"/>
    </ligand>
</feature>
<feature type="site" description="Transition state stabilizer" evidence="3">
    <location>
        <position position="37"/>
    </location>
</feature>
<feature type="modified residue" description="Phosphoserine" evidence="2">
    <location>
        <position position="230"/>
    </location>
</feature>
<feature type="sequence conflict" description="In Ref. 1; AAI46133." evidence="4" ref="1">
    <original>G</original>
    <variation>D</variation>
    <location>
        <position position="137"/>
    </location>
</feature>
<keyword id="KW-0067">ATP-binding</keyword>
<keyword id="KW-0119">Carbohydrate metabolism</keyword>
<keyword id="KW-0299">Galactose metabolism</keyword>
<keyword id="KW-0418">Kinase</keyword>
<keyword id="KW-0547">Nucleotide-binding</keyword>
<keyword id="KW-0597">Phosphoprotein</keyword>
<keyword id="KW-1185">Reference proteome</keyword>
<keyword id="KW-0808">Transferase</keyword>
<proteinExistence type="evidence at transcript level"/>
<protein>
    <recommendedName>
        <fullName>Galactokinase</fullName>
        <ecNumber evidence="2">2.7.1.6</ecNumber>
    </recommendedName>
    <alternativeName>
        <fullName>Galactose kinase</fullName>
    </alternativeName>
</protein>